<feature type="chain" id="PRO_1000045716" description="Protein SlyX homolog">
    <location>
        <begin position="1"/>
        <end position="73"/>
    </location>
</feature>
<accession>A5UH79</accession>
<evidence type="ECO:0000255" key="1">
    <source>
        <dbReference type="HAMAP-Rule" id="MF_00715"/>
    </source>
</evidence>
<gene>
    <name evidence="1" type="primary">slyX</name>
    <name type="ordered locus">CGSHiGG_06140</name>
</gene>
<comment type="similarity">
    <text evidence="1">Belongs to the SlyX family.</text>
</comment>
<name>SLYX_HAEIG</name>
<dbReference type="EMBL" id="CP000672">
    <property type="protein sequence ID" value="ABR00135.1"/>
    <property type="molecule type" value="Genomic_DNA"/>
</dbReference>
<dbReference type="SMR" id="A5UH79"/>
<dbReference type="KEGG" id="hiq:CGSHiGG_06140"/>
<dbReference type="HOGENOM" id="CLU_180796_4_0_6"/>
<dbReference type="Proteomes" id="UP000001990">
    <property type="component" value="Chromosome"/>
</dbReference>
<dbReference type="Gene3D" id="1.20.5.300">
    <property type="match status" value="1"/>
</dbReference>
<dbReference type="HAMAP" id="MF_00715">
    <property type="entry name" value="SlyX"/>
    <property type="match status" value="1"/>
</dbReference>
<dbReference type="InterPro" id="IPR007236">
    <property type="entry name" value="SlyX"/>
</dbReference>
<dbReference type="NCBIfam" id="NF002556">
    <property type="entry name" value="PRK02119.1"/>
    <property type="match status" value="1"/>
</dbReference>
<dbReference type="PANTHER" id="PTHR36508">
    <property type="entry name" value="PROTEIN SLYX"/>
    <property type="match status" value="1"/>
</dbReference>
<dbReference type="PANTHER" id="PTHR36508:SF1">
    <property type="entry name" value="PROTEIN SLYX"/>
    <property type="match status" value="1"/>
</dbReference>
<dbReference type="Pfam" id="PF04102">
    <property type="entry name" value="SlyX"/>
    <property type="match status" value="1"/>
</dbReference>
<proteinExistence type="inferred from homology"/>
<sequence length="73" mass="8733">MQIQQMLENRIEELEMKIAFQEQLLDELNHALVQQQFDIDKMQVQLRYMANKLKDFQPSNIASQSEETPPPHY</sequence>
<reference key="1">
    <citation type="journal article" date="2007" name="Genome Biol.">
        <title>Characterization and modeling of the Haemophilus influenzae core and supragenomes based on the complete genomic sequences of Rd and 12 clinical nontypeable strains.</title>
        <authorList>
            <person name="Hogg J.S."/>
            <person name="Hu F.Z."/>
            <person name="Janto B."/>
            <person name="Boissy R."/>
            <person name="Hayes J."/>
            <person name="Keefe R."/>
            <person name="Post J.C."/>
            <person name="Ehrlich G.D."/>
        </authorList>
    </citation>
    <scope>NUCLEOTIDE SEQUENCE [LARGE SCALE GENOMIC DNA]</scope>
    <source>
        <strain>PittGG</strain>
    </source>
</reference>
<protein>
    <recommendedName>
        <fullName evidence="1">Protein SlyX homolog</fullName>
    </recommendedName>
</protein>
<organism>
    <name type="scientific">Haemophilus influenzae (strain PittGG)</name>
    <dbReference type="NCBI Taxonomy" id="374931"/>
    <lineage>
        <taxon>Bacteria</taxon>
        <taxon>Pseudomonadati</taxon>
        <taxon>Pseudomonadota</taxon>
        <taxon>Gammaproteobacteria</taxon>
        <taxon>Pasteurellales</taxon>
        <taxon>Pasteurellaceae</taxon>
        <taxon>Haemophilus</taxon>
    </lineage>
</organism>